<sequence>MRTPRRHCRRIAVLAAVSIAATVVAGCSSGSKPSGGPLPDAKPLVEEATAQTKALKSAHMVLTVNGKIPGLSLKTLSGDLTTNPTAATGNVKLTLGGSDIDADFVVFDGILYATLTPNQWSDFGPAADIYDPAQVLNPDTGLANVLANFADAKAEGRDTINGQNTIRISGKVSAQAVNQIAPPFNATQPVPATVWIQETGDHQLAQAQLDRGSGNSVQMTLSKWGEKVQVTKPPVS</sequence>
<feature type="signal peptide" evidence="3">
    <location>
        <begin position="1"/>
        <end position="26"/>
    </location>
</feature>
<feature type="chain" id="PRO_0000434645" description="Lipoarabinomannan carrier protein LprG" evidence="3">
    <location>
        <begin position="27"/>
        <end position="236"/>
    </location>
</feature>
<feature type="lipid moiety-binding region" description="N-palmitoyl cysteine" evidence="3">
    <location>
        <position position="27"/>
    </location>
</feature>
<feature type="lipid moiety-binding region" description="S-diacylglycerol cysteine" evidence="3">
    <location>
        <position position="27"/>
    </location>
</feature>
<dbReference type="EMBL" id="AM408590">
    <property type="protein sequence ID" value="CAL71459.1"/>
    <property type="molecule type" value="Genomic_DNA"/>
</dbReference>
<dbReference type="RefSeq" id="WP_003407315.1">
    <property type="nucleotide sequence ID" value="NC_008769.1"/>
</dbReference>
<dbReference type="SMR" id="A0A0H3M3S8"/>
<dbReference type="KEGG" id="mbb:BCG_1472c"/>
<dbReference type="HOGENOM" id="CLU_074100_1_0_11"/>
<dbReference type="Proteomes" id="UP000001472">
    <property type="component" value="Chromosome"/>
</dbReference>
<dbReference type="GO" id="GO:0097691">
    <property type="term" value="C:bacterial extracellular vesicle"/>
    <property type="evidence" value="ECO:0000314"/>
    <property type="project" value="UniProtKB"/>
</dbReference>
<dbReference type="GO" id="GO:0005886">
    <property type="term" value="C:plasma membrane"/>
    <property type="evidence" value="ECO:0007669"/>
    <property type="project" value="UniProtKB-SubCell"/>
</dbReference>
<dbReference type="GO" id="GO:0008289">
    <property type="term" value="F:lipid binding"/>
    <property type="evidence" value="ECO:0007669"/>
    <property type="project" value="UniProtKB-KW"/>
</dbReference>
<dbReference type="GO" id="GO:0006869">
    <property type="term" value="P:lipid transport"/>
    <property type="evidence" value="ECO:0007669"/>
    <property type="project" value="UniProtKB-KW"/>
</dbReference>
<dbReference type="CDD" id="cd16334">
    <property type="entry name" value="LppX-like"/>
    <property type="match status" value="1"/>
</dbReference>
<dbReference type="FunFam" id="2.50.20.20:FF:000004">
    <property type="entry name" value="Lipoarabinomannan carrier protein LprG"/>
    <property type="match status" value="1"/>
</dbReference>
<dbReference type="Gene3D" id="2.50.20.20">
    <property type="match status" value="1"/>
</dbReference>
<dbReference type="InterPro" id="IPR029046">
    <property type="entry name" value="LolA/LolB/LppX"/>
</dbReference>
<dbReference type="InterPro" id="IPR009830">
    <property type="entry name" value="LppX/LprAFG"/>
</dbReference>
<dbReference type="Pfam" id="PF07161">
    <property type="entry name" value="LppX_LprAFG"/>
    <property type="match status" value="1"/>
</dbReference>
<dbReference type="SUPFAM" id="SSF89392">
    <property type="entry name" value="Prokaryotic lipoproteins and lipoprotein localization factors"/>
    <property type="match status" value="1"/>
</dbReference>
<dbReference type="PROSITE" id="PS51257">
    <property type="entry name" value="PROKAR_LIPOPROTEIN"/>
    <property type="match status" value="1"/>
</dbReference>
<reference key="1">
    <citation type="journal article" date="2007" name="Proc. Natl. Acad. Sci. U.S.A.">
        <title>Genome plasticity of BCG and impact on vaccine efficacy.</title>
        <authorList>
            <person name="Brosch R."/>
            <person name="Gordon S.V."/>
            <person name="Garnier T."/>
            <person name="Eiglmeier K."/>
            <person name="Frigui W."/>
            <person name="Valenti P."/>
            <person name="Dos Santos S."/>
            <person name="Duthoy S."/>
            <person name="Lacroix C."/>
            <person name="Garcia-Pelayo C."/>
            <person name="Inwald J.K."/>
            <person name="Golby P."/>
            <person name="Garcia J.N."/>
            <person name="Hewinson R.G."/>
            <person name="Behr M.A."/>
            <person name="Quail M.A."/>
            <person name="Churcher C."/>
            <person name="Barrell B.G."/>
            <person name="Parkhill J."/>
            <person name="Cole S.T."/>
        </authorList>
    </citation>
    <scope>NUCLEOTIDE SEQUENCE [LARGE SCALE GENOMIC DNA]</scope>
    <source>
        <strain>BCG / Pasteur 1173P2</strain>
    </source>
</reference>
<reference key="2">
    <citation type="journal article" date="2010" name="Protein Cell">
        <title>Identification of four novel DC-SIGN ligands on Mycobacterium bovis BCG.</title>
        <authorList>
            <person name="Carroll M.V."/>
            <person name="Sim R.B."/>
            <person name="Bigi F."/>
            <person name="Jaekel A."/>
            <person name="Antrobus R."/>
            <person name="Mitchell D.A."/>
        </authorList>
    </citation>
    <scope>FUNCTION</scope>
    <scope>IDENTIFICATION BY MASS SPECTROMETRY</scope>
    <scope>INTERACTION WITH HUMAN CD209</scope>
    <source>
        <strain>BCG / Pasteur 1173P2</strain>
    </source>
</reference>
<reference key="3">
    <citation type="journal article" date="2011" name="J. Clin. Invest.">
        <title>Mycobacteria release active membrane vesicles that modulate immune responses in a TLR2-dependent manner in mice.</title>
        <authorList>
            <person name="Prados-Rosales R."/>
            <person name="Baena A."/>
            <person name="Martinez L.R."/>
            <person name="Luque-Garcia J."/>
            <person name="Kalscheuer R."/>
            <person name="Veeraraghavan U."/>
            <person name="Camara C."/>
            <person name="Nosanchuk J.D."/>
            <person name="Besra G.S."/>
            <person name="Chen B."/>
            <person name="Jimenez J."/>
            <person name="Glatman-Freedman A."/>
            <person name="Jacobs W.R. Jr."/>
            <person name="Porcelli S.A."/>
            <person name="Casadevall A."/>
        </authorList>
    </citation>
    <scope>SUBCELLULAR LOCATION</scope>
    <source>
        <strain>BCG / Pasteur 1173P2</strain>
    </source>
</reference>
<comment type="function">
    <text evidence="1">Helps membrane protein BCG_1471c (P55) transport triacylglycerides (TAG) across the inner cell membrane into the periplasm and probably ultimately to the outer membrane (By similarity). Binds TAG in its hydrophobic cavity and transfers it between lipid bilayers (By similarity). TAG probably regulates lipid metabolism and growth regulation and plays a structural role in the outer membrane (By similarity). Binds di- and triacylated phosphatidyl-myo-inositol mannosides (PIMs), and glycolipid lipoglycan modulins lipoarabinomannan (LAM) and lipomannan (LM), facilitating their recognition by TLR2. Required for activity of drug efflux transporter BCG_1471c. Required, probably with BCG_1471c, for normal surface localization of LAM.</text>
</comment>
<comment type="function">
    <text evidence="1 4">Constitutes a host TLR2 agonist (toll-like receptor) (By similarity). In vitro binds to human CD209 (DC-SIGN) and CD209-like antigen (CLEC4M) and may help mediate adherence to host cells (PubMed:21203928).</text>
</comment>
<comment type="subunit">
    <text evidence="4">In vitro able to bind to host (human) CD209, may also bind CD209-like antigen (CLEC4M) (PubMed:21203928).</text>
</comment>
<comment type="subcellular location">
    <subcellularLocation>
        <location evidence="3 8">Cell inner membrane</location>
        <topology evidence="3">Lipid-anchor</topology>
        <orientation evidence="8">Periplasmic side</orientation>
    </subcellularLocation>
    <subcellularLocation>
        <location evidence="1">Secreted</location>
        <location evidence="1">Cell wall</location>
    </subcellularLocation>
    <subcellularLocation>
        <location evidence="1">Secreted</location>
    </subcellularLocation>
    <text evidence="5">Present in extracytoplasmic vesicles (PubMed:21364279).</text>
</comment>
<comment type="domain">
    <text evidence="1">Forms a U-shaped beta-half-barrel with a small hydrophobic cavity able to hold a triacylated lipid or triacylglyceride (By similarity). A flexible lid region may move to accommodate different TAG molecules (By similarity).</text>
</comment>
<comment type="PTM">
    <text evidence="2">Modified by Lgt on Cys-27 with an S-linked diacylglyceral, signal peptide is removed by LspA, Cys-27 is further modifed with a fatty acid on its amino group by Lnt yielding a triacylated protein (By similarity).</text>
</comment>
<comment type="miscellaneous">
    <text evidence="8">Bacterial LAM blocks host cell phagosome-lysosome fusion and is one way in which Mycobacteria evade the host immune system.</text>
</comment>
<comment type="miscellaneous">
    <text evidence="8">Triacylglycerides accumulate in lipid droplets in the cytoplasm of M.tuberculosis stationary phase and dormant bacteria, and are used as an energy source during starvation.</text>
</comment>
<comment type="similarity">
    <text evidence="8">Belongs to the LppX/LprAFG lipoprotein family.</text>
</comment>
<protein>
    <recommendedName>
        <fullName evidence="1">Lipoarabinomannan carrier protein LprG</fullName>
    </recommendedName>
    <alternativeName>
        <fullName>27 kDa lipoprotein</fullName>
    </alternativeName>
    <alternativeName>
        <fullName>Antigen P27</fullName>
    </alternativeName>
    <alternativeName>
        <fullName evidence="7">Lipoprotein LprG</fullName>
    </alternativeName>
    <alternativeName>
        <fullName>Triacylglyceride transfer protein LprG</fullName>
    </alternativeName>
</protein>
<gene>
    <name evidence="6" type="primary">lprG</name>
    <name type="ordered locus">BCG_1472c</name>
</gene>
<proteinExistence type="evidence at protein level"/>
<evidence type="ECO:0000250" key="1">
    <source>
        <dbReference type="UniProtKB" id="P9WK45"/>
    </source>
</evidence>
<evidence type="ECO:0000250" key="2">
    <source>
        <dbReference type="UniProtKB" id="P9WK47"/>
    </source>
</evidence>
<evidence type="ECO:0000255" key="3">
    <source>
        <dbReference type="PROSITE-ProRule" id="PRU00303"/>
    </source>
</evidence>
<evidence type="ECO:0000269" key="4">
    <source>
    </source>
</evidence>
<evidence type="ECO:0000269" key="5">
    <source>
    </source>
</evidence>
<evidence type="ECO:0000303" key="6">
    <source>
    </source>
</evidence>
<evidence type="ECO:0000303" key="7">
    <source>
    </source>
</evidence>
<evidence type="ECO:0000305" key="8"/>
<keyword id="KW-0997">Cell inner membrane</keyword>
<keyword id="KW-1003">Cell membrane</keyword>
<keyword id="KW-0134">Cell wall</keyword>
<keyword id="KW-0445">Lipid transport</keyword>
<keyword id="KW-0446">Lipid-binding</keyword>
<keyword id="KW-0449">Lipoprotein</keyword>
<keyword id="KW-0472">Membrane</keyword>
<keyword id="KW-0564">Palmitate</keyword>
<keyword id="KW-0964">Secreted</keyword>
<keyword id="KW-0732">Signal</keyword>
<keyword id="KW-0813">Transport</keyword>
<name>LPRG_MYCBP</name>
<accession>A0A0H3M3S8</accession>
<organism>
    <name type="scientific">Mycobacterium bovis (strain BCG / Pasteur 1173P2)</name>
    <dbReference type="NCBI Taxonomy" id="410289"/>
    <lineage>
        <taxon>Bacteria</taxon>
        <taxon>Bacillati</taxon>
        <taxon>Actinomycetota</taxon>
        <taxon>Actinomycetes</taxon>
        <taxon>Mycobacteriales</taxon>
        <taxon>Mycobacteriaceae</taxon>
        <taxon>Mycobacterium</taxon>
        <taxon>Mycobacterium tuberculosis complex</taxon>
    </lineage>
</organism>